<gene>
    <name evidence="3" type="primary">atpI</name>
    <name type="ordered locus">AF_1159</name>
</gene>
<accession>O29106</accession>
<keyword id="KW-1003">Cell membrane</keyword>
<keyword id="KW-0375">Hydrogen ion transport</keyword>
<keyword id="KW-0406">Ion transport</keyword>
<keyword id="KW-0472">Membrane</keyword>
<keyword id="KW-1185">Reference proteome</keyword>
<keyword id="KW-0812">Transmembrane</keyword>
<keyword id="KW-1133">Transmembrane helix</keyword>
<keyword id="KW-0813">Transport</keyword>
<comment type="function">
    <text evidence="1">Component of the A-type ATP synthase that produces ATP from ADP in the presence of a proton gradient across the membrane.</text>
</comment>
<comment type="subunit">
    <text evidence="1">Has multiple subunits with at least A(3), B(3), C, D, E, F, H, I and proteolipid K(x).</text>
</comment>
<comment type="subcellular location">
    <subcellularLocation>
        <location evidence="4">Cell membrane</location>
        <topology evidence="4">Multi-pass membrane protein</topology>
    </subcellularLocation>
</comment>
<comment type="similarity">
    <text evidence="4">Belongs to the V-ATPase 116 kDa subunit family.</text>
</comment>
<reference key="1">
    <citation type="journal article" date="1997" name="Nature">
        <title>The complete genome sequence of the hyperthermophilic, sulphate-reducing archaeon Archaeoglobus fulgidus.</title>
        <authorList>
            <person name="Klenk H.-P."/>
            <person name="Clayton R.A."/>
            <person name="Tomb J.-F."/>
            <person name="White O."/>
            <person name="Nelson K.E."/>
            <person name="Ketchum K.A."/>
            <person name="Dodson R.J."/>
            <person name="Gwinn M.L."/>
            <person name="Hickey E.K."/>
            <person name="Peterson J.D."/>
            <person name="Richardson D.L."/>
            <person name="Kerlavage A.R."/>
            <person name="Graham D.E."/>
            <person name="Kyrpides N.C."/>
            <person name="Fleischmann R.D."/>
            <person name="Quackenbush J."/>
            <person name="Lee N.H."/>
            <person name="Sutton G.G."/>
            <person name="Gill S.R."/>
            <person name="Kirkness E.F."/>
            <person name="Dougherty B.A."/>
            <person name="McKenney K."/>
            <person name="Adams M.D."/>
            <person name="Loftus B.J."/>
            <person name="Peterson S.N."/>
            <person name="Reich C.I."/>
            <person name="McNeil L.K."/>
            <person name="Badger J.H."/>
            <person name="Glodek A."/>
            <person name="Zhou L."/>
            <person name="Overbeek R."/>
            <person name="Gocayne J.D."/>
            <person name="Weidman J.F."/>
            <person name="McDonald L.A."/>
            <person name="Utterback T.R."/>
            <person name="Cotton M.D."/>
            <person name="Spriggs T."/>
            <person name="Artiach P."/>
            <person name="Kaine B.P."/>
            <person name="Sykes S.M."/>
            <person name="Sadow P.W."/>
            <person name="D'Andrea K.P."/>
            <person name="Bowman C."/>
            <person name="Fujii C."/>
            <person name="Garland S.A."/>
            <person name="Mason T.M."/>
            <person name="Olsen G.J."/>
            <person name="Fraser C.M."/>
            <person name="Smith H.O."/>
            <person name="Woese C.R."/>
            <person name="Venter J.C."/>
        </authorList>
    </citation>
    <scope>NUCLEOTIDE SEQUENCE [LARGE SCALE GENOMIC DNA]</scope>
    <source>
        <strain>ATCC 49558 / DSM 4304 / JCM 9628 / NBRC 100126 / VC-16</strain>
    </source>
</reference>
<proteinExistence type="inferred from homology"/>
<organism>
    <name type="scientific">Archaeoglobus fulgidus (strain ATCC 49558 / DSM 4304 / JCM 9628 / NBRC 100126 / VC-16)</name>
    <dbReference type="NCBI Taxonomy" id="224325"/>
    <lineage>
        <taxon>Archaea</taxon>
        <taxon>Methanobacteriati</taxon>
        <taxon>Methanobacteriota</taxon>
        <taxon>Archaeoglobi</taxon>
        <taxon>Archaeoglobales</taxon>
        <taxon>Archaeoglobaceae</taxon>
        <taxon>Archaeoglobus</taxon>
    </lineage>
</organism>
<name>AATI_ARCFU</name>
<protein>
    <recommendedName>
        <fullName evidence="4">A-type ATP synthase subunit I</fullName>
    </recommendedName>
</protein>
<evidence type="ECO:0000250" key="1">
    <source>
        <dbReference type="UniProtKB" id="Q57675"/>
    </source>
</evidence>
<evidence type="ECO:0000255" key="2"/>
<evidence type="ECO:0000303" key="3">
    <source>
    </source>
</evidence>
<evidence type="ECO:0000305" key="4"/>
<dbReference type="EMBL" id="AE000782">
    <property type="protein sequence ID" value="AAB90076.1"/>
    <property type="molecule type" value="Genomic_DNA"/>
</dbReference>
<dbReference type="PIR" id="F69394">
    <property type="entry name" value="F69394"/>
</dbReference>
<dbReference type="RefSeq" id="WP_010878656.1">
    <property type="nucleotide sequence ID" value="NC_000917.1"/>
</dbReference>
<dbReference type="SMR" id="O29106"/>
<dbReference type="STRING" id="224325.AF_1159"/>
<dbReference type="PaxDb" id="224325-AF_1159"/>
<dbReference type="EnsemblBacteria" id="AAB90076">
    <property type="protein sequence ID" value="AAB90076"/>
    <property type="gene ID" value="AF_1159"/>
</dbReference>
<dbReference type="GeneID" id="1484383"/>
<dbReference type="KEGG" id="afu:AF_1159"/>
<dbReference type="eggNOG" id="arCOG04138">
    <property type="taxonomic scope" value="Archaea"/>
</dbReference>
<dbReference type="HOGENOM" id="CLU_025558_2_1_2"/>
<dbReference type="OrthoDB" id="85892at2157"/>
<dbReference type="PhylomeDB" id="O29106"/>
<dbReference type="Proteomes" id="UP000002199">
    <property type="component" value="Chromosome"/>
</dbReference>
<dbReference type="GO" id="GO:0005886">
    <property type="term" value="C:plasma membrane"/>
    <property type="evidence" value="ECO:0007669"/>
    <property type="project" value="UniProtKB-SubCell"/>
</dbReference>
<dbReference type="GO" id="GO:0033179">
    <property type="term" value="C:proton-transporting V-type ATPase, V0 domain"/>
    <property type="evidence" value="ECO:0007669"/>
    <property type="project" value="InterPro"/>
</dbReference>
<dbReference type="GO" id="GO:0016471">
    <property type="term" value="C:vacuolar proton-transporting V-type ATPase complex"/>
    <property type="evidence" value="ECO:0007669"/>
    <property type="project" value="TreeGrafter"/>
</dbReference>
<dbReference type="GO" id="GO:0051117">
    <property type="term" value="F:ATPase binding"/>
    <property type="evidence" value="ECO:0007669"/>
    <property type="project" value="TreeGrafter"/>
</dbReference>
<dbReference type="GO" id="GO:0046961">
    <property type="term" value="F:proton-transporting ATPase activity, rotational mechanism"/>
    <property type="evidence" value="ECO:0007669"/>
    <property type="project" value="InterPro"/>
</dbReference>
<dbReference type="GO" id="GO:0007035">
    <property type="term" value="P:vacuolar acidification"/>
    <property type="evidence" value="ECO:0007669"/>
    <property type="project" value="TreeGrafter"/>
</dbReference>
<dbReference type="Gene3D" id="1.20.1460.20">
    <property type="match status" value="1"/>
</dbReference>
<dbReference type="Gene3D" id="3.30.70.2170">
    <property type="match status" value="1"/>
</dbReference>
<dbReference type="Gene3D" id="3.30.70.2750">
    <property type="match status" value="1"/>
</dbReference>
<dbReference type="InterPro" id="IPR002490">
    <property type="entry name" value="V-ATPase_116kDa_su"/>
</dbReference>
<dbReference type="NCBIfam" id="NF004430">
    <property type="entry name" value="PRK05771.2-4"/>
    <property type="match status" value="1"/>
</dbReference>
<dbReference type="PANTHER" id="PTHR11629:SF63">
    <property type="entry name" value="V-TYPE PROTON ATPASE SUBUNIT A"/>
    <property type="match status" value="1"/>
</dbReference>
<dbReference type="PANTHER" id="PTHR11629">
    <property type="entry name" value="VACUOLAR PROTON ATPASES"/>
    <property type="match status" value="1"/>
</dbReference>
<dbReference type="Pfam" id="PF01496">
    <property type="entry name" value="V_ATPase_I"/>
    <property type="match status" value="1"/>
</dbReference>
<sequence>MLKPERMVRVSVVGPREKLGETADLLHRLNLVHIEEPEESEYFRIGEPHPDASVVSRALVQMRSFISHLKLDPSRIVPRRKFRESEIEAQLKEKLDEYQQLIGERIEYLRSVDEKIASLQEQLNQIEPLKRLGIPARLLKGYKTLRVFVGFVKENPTEKFAQVTSDFEVFATEYEKELVVAVFVKAEYGDEFLRILQECGYREIQVPDVEDFEAKISEIEKEIESLKSRKEQVEKEIEEVKVKEAETLLAIEEYLSSQMDKYELPLRTLVSKYSFVLVGYLPAKALNEFKAKMDANGVAVEVLDEEGEPPTKLSNPAGVRNFELLTTTFGIPKYKEIDPTVFIAIFFPIFFGMMLGDIGYGLLVTVISLYLKRVFKTEGWQRMLNIGVYAGVMSIIFGFIYGECFGPFIVPGEYEPYQIHFIGSQLEHLYEFHHGHPIFDRVEEMGVKILLFATIVIGIAKILFGFALGFYNVYVEHGLKDAILEKLSWIIGVLGLAMIIFGFAYNVGVFYQLGMGPNPGDVPPLPLPGLMEGWQAGLNVYYLAALPLLVVWFILFVMGEVPKMGAMGVILAVELLTWFGQIMSYARLLAIGLSSVYIAFVINFIGMKLIDPVGISIPIVGAIVLLIGHVGNLILGILDPGLQSLRLHYVEFFTKFFEGGGRLYEPFGRIKRFIEE</sequence>
<feature type="chain" id="PRO_0000119227" description="A-type ATP synthase subunit I">
    <location>
        <begin position="1"/>
        <end position="676"/>
    </location>
</feature>
<feature type="transmembrane region" description="Helical" evidence="2">
    <location>
        <begin position="341"/>
        <end position="361"/>
    </location>
</feature>
<feature type="transmembrane region" description="Helical" evidence="2">
    <location>
        <begin position="390"/>
        <end position="410"/>
    </location>
</feature>
<feature type="transmembrane region" description="Helical" evidence="2">
    <location>
        <begin position="449"/>
        <end position="469"/>
    </location>
</feature>
<feature type="transmembrane region" description="Helical" evidence="2">
    <location>
        <begin position="490"/>
        <end position="510"/>
    </location>
</feature>
<feature type="transmembrane region" description="Helical" evidence="2">
    <location>
        <begin position="538"/>
        <end position="558"/>
    </location>
</feature>
<feature type="transmembrane region" description="Helical" evidence="2">
    <location>
        <begin position="564"/>
        <end position="584"/>
    </location>
</feature>
<feature type="transmembrane region" description="Helical" evidence="2">
    <location>
        <begin position="590"/>
        <end position="610"/>
    </location>
</feature>
<feature type="transmembrane region" description="Helical" evidence="2">
    <location>
        <begin position="617"/>
        <end position="637"/>
    </location>
</feature>